<name>DHE4_NEUIN</name>
<dbReference type="EC" id="1.4.1.4"/>
<dbReference type="EMBL" id="AF285427">
    <property type="protein sequence ID" value="AAG01158.1"/>
    <property type="molecule type" value="mRNA"/>
</dbReference>
<dbReference type="SMR" id="Q9HGU4"/>
<dbReference type="GO" id="GO:0005829">
    <property type="term" value="C:cytosol"/>
    <property type="evidence" value="ECO:0007669"/>
    <property type="project" value="TreeGrafter"/>
</dbReference>
<dbReference type="GO" id="GO:0004354">
    <property type="term" value="F:glutamate dehydrogenase (NADP+) activity"/>
    <property type="evidence" value="ECO:0007669"/>
    <property type="project" value="UniProtKB-EC"/>
</dbReference>
<dbReference type="GO" id="GO:0006537">
    <property type="term" value="P:glutamate biosynthetic process"/>
    <property type="evidence" value="ECO:0007669"/>
    <property type="project" value="TreeGrafter"/>
</dbReference>
<dbReference type="CDD" id="cd05313">
    <property type="entry name" value="NAD_bind_2_Glu_DH"/>
    <property type="match status" value="1"/>
</dbReference>
<dbReference type="FunFam" id="1.10.285.10:FF:000001">
    <property type="entry name" value="Glutamate dehydrogenase"/>
    <property type="match status" value="1"/>
</dbReference>
<dbReference type="FunFam" id="1.10.285.10:FF:000003">
    <property type="entry name" value="Glutamate dehydrogenase"/>
    <property type="match status" value="1"/>
</dbReference>
<dbReference type="FunFam" id="3.40.50.10860:FF:000002">
    <property type="entry name" value="Glutamate dehydrogenase"/>
    <property type="match status" value="1"/>
</dbReference>
<dbReference type="FunFam" id="3.40.50.720:FF:000030">
    <property type="entry name" value="Glutamate dehydrogenase"/>
    <property type="match status" value="1"/>
</dbReference>
<dbReference type="Gene3D" id="1.10.285.10">
    <property type="entry name" value="Glutamate Dehydrogenase, chain A, domain 3"/>
    <property type="match status" value="2"/>
</dbReference>
<dbReference type="Gene3D" id="3.40.50.10860">
    <property type="entry name" value="Leucine Dehydrogenase, chain A, domain 1"/>
    <property type="match status" value="1"/>
</dbReference>
<dbReference type="Gene3D" id="3.40.50.720">
    <property type="entry name" value="NAD(P)-binding Rossmann-like Domain"/>
    <property type="match status" value="1"/>
</dbReference>
<dbReference type="InterPro" id="IPR046346">
    <property type="entry name" value="Aminoacid_DH-like_N_sf"/>
</dbReference>
<dbReference type="InterPro" id="IPR006095">
    <property type="entry name" value="Glu/Leu/Phe/Val/Trp_DH"/>
</dbReference>
<dbReference type="InterPro" id="IPR006096">
    <property type="entry name" value="Glu/Leu/Phe/Val/Trp_DH_C"/>
</dbReference>
<dbReference type="InterPro" id="IPR006097">
    <property type="entry name" value="Glu/Leu/Phe/Val/Trp_DH_dimer"/>
</dbReference>
<dbReference type="InterPro" id="IPR033524">
    <property type="entry name" value="Glu/Leu/Phe/Val_DH_AS"/>
</dbReference>
<dbReference type="InterPro" id="IPR014362">
    <property type="entry name" value="Glu_DH"/>
</dbReference>
<dbReference type="InterPro" id="IPR050724">
    <property type="entry name" value="Glu_Leu_Phe_Val_DH"/>
</dbReference>
<dbReference type="InterPro" id="IPR036291">
    <property type="entry name" value="NAD(P)-bd_dom_sf"/>
</dbReference>
<dbReference type="InterPro" id="IPR033922">
    <property type="entry name" value="NAD_bind_Glu_DH"/>
</dbReference>
<dbReference type="NCBIfam" id="NF006929">
    <property type="entry name" value="PRK09414.1"/>
    <property type="match status" value="1"/>
</dbReference>
<dbReference type="PANTHER" id="PTHR43571">
    <property type="entry name" value="NADP-SPECIFIC GLUTAMATE DEHYDROGENASE 1-RELATED"/>
    <property type="match status" value="1"/>
</dbReference>
<dbReference type="PANTHER" id="PTHR43571:SF1">
    <property type="entry name" value="NADP-SPECIFIC GLUTAMATE DEHYDROGENASE 1-RELATED"/>
    <property type="match status" value="1"/>
</dbReference>
<dbReference type="Pfam" id="PF00208">
    <property type="entry name" value="ELFV_dehydrog"/>
    <property type="match status" value="1"/>
</dbReference>
<dbReference type="Pfam" id="PF02812">
    <property type="entry name" value="ELFV_dehydrog_N"/>
    <property type="match status" value="1"/>
</dbReference>
<dbReference type="PIRSF" id="PIRSF000185">
    <property type="entry name" value="Glu_DH"/>
    <property type="match status" value="1"/>
</dbReference>
<dbReference type="PRINTS" id="PR00082">
    <property type="entry name" value="GLFDHDRGNASE"/>
</dbReference>
<dbReference type="SMART" id="SM00839">
    <property type="entry name" value="ELFV_dehydrog"/>
    <property type="match status" value="1"/>
</dbReference>
<dbReference type="SUPFAM" id="SSF53223">
    <property type="entry name" value="Aminoacid dehydrogenase-like, N-terminal domain"/>
    <property type="match status" value="1"/>
</dbReference>
<dbReference type="SUPFAM" id="SSF51735">
    <property type="entry name" value="NAD(P)-binding Rossmann-fold domains"/>
    <property type="match status" value="1"/>
</dbReference>
<dbReference type="PROSITE" id="PS00074">
    <property type="entry name" value="GLFV_DEHYDROGENASE"/>
    <property type="match status" value="1"/>
</dbReference>
<comment type="catalytic activity">
    <reaction>
        <text>L-glutamate + NADP(+) + H2O = 2-oxoglutarate + NH4(+) + NADPH + H(+)</text>
        <dbReference type="Rhea" id="RHEA:11612"/>
        <dbReference type="ChEBI" id="CHEBI:15377"/>
        <dbReference type="ChEBI" id="CHEBI:15378"/>
        <dbReference type="ChEBI" id="CHEBI:16810"/>
        <dbReference type="ChEBI" id="CHEBI:28938"/>
        <dbReference type="ChEBI" id="CHEBI:29985"/>
        <dbReference type="ChEBI" id="CHEBI:57783"/>
        <dbReference type="ChEBI" id="CHEBI:58349"/>
        <dbReference type="EC" id="1.4.1.4"/>
    </reaction>
</comment>
<comment type="subunit">
    <text evidence="1">Homohexamer.</text>
</comment>
<comment type="similarity">
    <text evidence="3">Belongs to the Glu/Leu/Phe/Val dehydrogenases family.</text>
</comment>
<accession>Q9HGU4</accession>
<organism>
    <name type="scientific">Neurospora intermedia</name>
    <dbReference type="NCBI Taxonomy" id="5142"/>
    <lineage>
        <taxon>Eukaryota</taxon>
        <taxon>Fungi</taxon>
        <taxon>Dikarya</taxon>
        <taxon>Ascomycota</taxon>
        <taxon>Pezizomycotina</taxon>
        <taxon>Sordariomycetes</taxon>
        <taxon>Sordariomycetidae</taxon>
        <taxon>Sordariales</taxon>
        <taxon>Sordariaceae</taxon>
        <taxon>Neurospora</taxon>
    </lineage>
</organism>
<sequence length="454" mass="48888">MSNLPSEPEFEQAYKELAYTLENSSLFQKHPEYRTALTVASIPERVIQFRVVWEDDNGNVQVNRGYRVQFNSALGPYKGGLRLHPSVNLSILKFLGFEQIFKNALTGLSMGGGKGGADFDPKGKSDAEIRRFCCAFMAELHKHIGADTDVPAGDIGVGGREIGYMFGAYRKAANRFEGVLTGKGLSWGGSLIRPEATGYGLVYYVGHMLEYSGAGSYAGKRVALSGSGNVAQYAALKLIELGATVVSLSDSKGALVATGESGITVEDINAVMAIKEARQSLTSFQHAGHLKWIEGARPWLHVGKVDIALPCATQNEVSKEEAEGLLAAGCKFVAEGSNMGCTLEAIEVFENHRKEKKGEAVWYAPGKAANCGGVAVSGLEMAQNSQRLNWTQAEVDEKLKDIMKNAFFNGLNTAKIYVEAAEGELPSLVAGSNIAGFVKVAQAMHDQGDWWSKN</sequence>
<evidence type="ECO:0000250" key="1"/>
<evidence type="ECO:0000255" key="2">
    <source>
        <dbReference type="PROSITE-ProRule" id="PRU10011"/>
    </source>
</evidence>
<evidence type="ECO:0000305" key="3"/>
<feature type="initiator methionine" description="Removed" evidence="1">
    <location>
        <position position="1"/>
    </location>
</feature>
<feature type="chain" id="PRO_0000182791" description="NADP-specific glutamate dehydrogenase">
    <location>
        <begin position="2"/>
        <end position="454"/>
    </location>
</feature>
<feature type="active site" evidence="2">
    <location>
        <position position="114"/>
    </location>
</feature>
<feature type="modified residue" description="N-acetylserine" evidence="1">
    <location>
        <position position="2"/>
    </location>
</feature>
<keyword id="KW-0007">Acetylation</keyword>
<keyword id="KW-0521">NADP</keyword>
<keyword id="KW-0560">Oxidoreductase</keyword>
<proteinExistence type="evidence at transcript level"/>
<reference key="1">
    <citation type="submission" date="2000-07" db="EMBL/GenBank/DDBJ databases">
        <title>The Neurospora GDH gene can increase the nitrogen assimilation in transgene tobacco.</title>
        <authorList>
            <person name="Wang F."/>
            <person name="Tien P."/>
        </authorList>
    </citation>
    <scope>NUCLEOTIDE SEQUENCE [MRNA]</scope>
</reference>
<protein>
    <recommendedName>
        <fullName>NADP-specific glutamate dehydrogenase</fullName>
        <shortName>NADP-GDH</shortName>
        <ecNumber>1.4.1.4</ecNumber>
    </recommendedName>
    <alternativeName>
        <fullName>NADP-dependent glutamate dehydrogenase</fullName>
    </alternativeName>
</protein>
<gene>
    <name type="primary">GDH</name>
</gene>